<sequence length="257" mass="26428">MKLLVKLGGTLLDSAASRDSLCLQIAAARAAGHEVTVVHGGGKQMTRYLTDRGIESRFVGGLRVTSPDTIDAVLKVFAGSVNHELVANLNRAGALAVGLSGIDSFLVEAEQMDPELGAVGRVTGSNPALLHLLTANGYVPVVACVAGDRLGQIYNVNADQMAVACASAFGACRLIFLTDVDGVMDNSNRVRPVLTAAESRQLIDEGIATGGMQAKLNAALSALADGVQQVRIAPGAAPGALQRILAGEEIGTKMVTA</sequence>
<accession>Q02B43</accession>
<protein>
    <recommendedName>
        <fullName evidence="1">Acetylglutamate kinase</fullName>
        <ecNumber evidence="1">2.7.2.8</ecNumber>
    </recommendedName>
    <alternativeName>
        <fullName evidence="1">N-acetyl-L-glutamate 5-phosphotransferase</fullName>
    </alternativeName>
    <alternativeName>
        <fullName evidence="1">NAG kinase</fullName>
        <shortName evidence="1">NAGK</shortName>
    </alternativeName>
</protein>
<name>ARGB_SOLUE</name>
<organism>
    <name type="scientific">Solibacter usitatus (strain Ellin6076)</name>
    <dbReference type="NCBI Taxonomy" id="234267"/>
    <lineage>
        <taxon>Bacteria</taxon>
        <taxon>Pseudomonadati</taxon>
        <taxon>Acidobacteriota</taxon>
        <taxon>Terriglobia</taxon>
        <taxon>Bryobacterales</taxon>
        <taxon>Solibacteraceae</taxon>
        <taxon>Candidatus Solibacter</taxon>
    </lineage>
</organism>
<comment type="function">
    <text evidence="1">Catalyzes the ATP-dependent phosphorylation of N-acetyl-L-glutamate.</text>
</comment>
<comment type="catalytic activity">
    <reaction evidence="1">
        <text>N-acetyl-L-glutamate + ATP = N-acetyl-L-glutamyl 5-phosphate + ADP</text>
        <dbReference type="Rhea" id="RHEA:14629"/>
        <dbReference type="ChEBI" id="CHEBI:30616"/>
        <dbReference type="ChEBI" id="CHEBI:44337"/>
        <dbReference type="ChEBI" id="CHEBI:57936"/>
        <dbReference type="ChEBI" id="CHEBI:456216"/>
        <dbReference type="EC" id="2.7.2.8"/>
    </reaction>
</comment>
<comment type="pathway">
    <text evidence="1">Amino-acid biosynthesis; L-arginine biosynthesis; N(2)-acetyl-L-ornithine from L-glutamate: step 2/4.</text>
</comment>
<comment type="subcellular location">
    <subcellularLocation>
        <location evidence="1">Cytoplasm</location>
    </subcellularLocation>
</comment>
<comment type="similarity">
    <text evidence="1">Belongs to the acetylglutamate kinase family. ArgB subfamily.</text>
</comment>
<keyword id="KW-0028">Amino-acid biosynthesis</keyword>
<keyword id="KW-0055">Arginine biosynthesis</keyword>
<keyword id="KW-0067">ATP-binding</keyword>
<keyword id="KW-0963">Cytoplasm</keyword>
<keyword id="KW-0418">Kinase</keyword>
<keyword id="KW-0547">Nucleotide-binding</keyword>
<keyword id="KW-0808">Transferase</keyword>
<dbReference type="EC" id="2.7.2.8" evidence="1"/>
<dbReference type="EMBL" id="CP000473">
    <property type="protein sequence ID" value="ABJ81723.1"/>
    <property type="molecule type" value="Genomic_DNA"/>
</dbReference>
<dbReference type="SMR" id="Q02B43"/>
<dbReference type="FunCoup" id="Q02B43">
    <property type="interactions" value="356"/>
</dbReference>
<dbReference type="STRING" id="234267.Acid_0724"/>
<dbReference type="KEGG" id="sus:Acid_0724"/>
<dbReference type="eggNOG" id="COG0548">
    <property type="taxonomic scope" value="Bacteria"/>
</dbReference>
<dbReference type="HOGENOM" id="CLU_053680_1_0_0"/>
<dbReference type="InParanoid" id="Q02B43"/>
<dbReference type="OrthoDB" id="9803155at2"/>
<dbReference type="UniPathway" id="UPA00068">
    <property type="reaction ID" value="UER00107"/>
</dbReference>
<dbReference type="GO" id="GO:0005737">
    <property type="term" value="C:cytoplasm"/>
    <property type="evidence" value="ECO:0007669"/>
    <property type="project" value="UniProtKB-SubCell"/>
</dbReference>
<dbReference type="GO" id="GO:0003991">
    <property type="term" value="F:acetylglutamate kinase activity"/>
    <property type="evidence" value="ECO:0007669"/>
    <property type="project" value="UniProtKB-UniRule"/>
</dbReference>
<dbReference type="GO" id="GO:0005524">
    <property type="term" value="F:ATP binding"/>
    <property type="evidence" value="ECO:0007669"/>
    <property type="project" value="UniProtKB-UniRule"/>
</dbReference>
<dbReference type="GO" id="GO:0042450">
    <property type="term" value="P:arginine biosynthetic process via ornithine"/>
    <property type="evidence" value="ECO:0007669"/>
    <property type="project" value="UniProtKB-UniRule"/>
</dbReference>
<dbReference type="GO" id="GO:0006526">
    <property type="term" value="P:L-arginine biosynthetic process"/>
    <property type="evidence" value="ECO:0007669"/>
    <property type="project" value="UniProtKB-UniPathway"/>
</dbReference>
<dbReference type="CDD" id="cd04238">
    <property type="entry name" value="AAK_NAGK-like"/>
    <property type="match status" value="1"/>
</dbReference>
<dbReference type="Gene3D" id="3.40.1160.10">
    <property type="entry name" value="Acetylglutamate kinase-like"/>
    <property type="match status" value="1"/>
</dbReference>
<dbReference type="HAMAP" id="MF_00082">
    <property type="entry name" value="ArgB"/>
    <property type="match status" value="1"/>
</dbReference>
<dbReference type="InterPro" id="IPR036393">
    <property type="entry name" value="AceGlu_kinase-like_sf"/>
</dbReference>
<dbReference type="InterPro" id="IPR004662">
    <property type="entry name" value="AcgluKinase_fam"/>
</dbReference>
<dbReference type="InterPro" id="IPR037528">
    <property type="entry name" value="ArgB"/>
</dbReference>
<dbReference type="InterPro" id="IPR001048">
    <property type="entry name" value="Asp/Glu/Uridylate_kinase"/>
</dbReference>
<dbReference type="InterPro" id="IPR001057">
    <property type="entry name" value="Glu/AcGlu_kinase"/>
</dbReference>
<dbReference type="NCBIfam" id="TIGR00761">
    <property type="entry name" value="argB"/>
    <property type="match status" value="1"/>
</dbReference>
<dbReference type="PANTHER" id="PTHR23342">
    <property type="entry name" value="N-ACETYLGLUTAMATE SYNTHASE"/>
    <property type="match status" value="1"/>
</dbReference>
<dbReference type="PANTHER" id="PTHR23342:SF0">
    <property type="entry name" value="N-ACETYLGLUTAMATE SYNTHASE, MITOCHONDRIAL"/>
    <property type="match status" value="1"/>
</dbReference>
<dbReference type="Pfam" id="PF00696">
    <property type="entry name" value="AA_kinase"/>
    <property type="match status" value="1"/>
</dbReference>
<dbReference type="PIRSF" id="PIRSF000728">
    <property type="entry name" value="NAGK"/>
    <property type="match status" value="1"/>
</dbReference>
<dbReference type="PRINTS" id="PR00474">
    <property type="entry name" value="GLU5KINASE"/>
</dbReference>
<dbReference type="SUPFAM" id="SSF53633">
    <property type="entry name" value="Carbamate kinase-like"/>
    <property type="match status" value="1"/>
</dbReference>
<feature type="chain" id="PRO_0000335666" description="Acetylglutamate kinase">
    <location>
        <begin position="1"/>
        <end position="257"/>
    </location>
</feature>
<feature type="binding site" evidence="1">
    <location>
        <begin position="41"/>
        <end position="42"/>
    </location>
    <ligand>
        <name>substrate</name>
    </ligand>
</feature>
<feature type="binding site" evidence="1">
    <location>
        <position position="63"/>
    </location>
    <ligand>
        <name>substrate</name>
    </ligand>
</feature>
<feature type="binding site" evidence="1">
    <location>
        <position position="155"/>
    </location>
    <ligand>
        <name>substrate</name>
    </ligand>
</feature>
<feature type="site" description="Transition state stabilizer" evidence="1">
    <location>
        <position position="6"/>
    </location>
</feature>
<feature type="site" description="Transition state stabilizer" evidence="1">
    <location>
        <position position="215"/>
    </location>
</feature>
<proteinExistence type="inferred from homology"/>
<reference key="1">
    <citation type="journal article" date="2009" name="Appl. Environ. Microbiol.">
        <title>Three genomes from the phylum Acidobacteria provide insight into the lifestyles of these microorganisms in soils.</title>
        <authorList>
            <person name="Ward N.L."/>
            <person name="Challacombe J.F."/>
            <person name="Janssen P.H."/>
            <person name="Henrissat B."/>
            <person name="Coutinho P.M."/>
            <person name="Wu M."/>
            <person name="Xie G."/>
            <person name="Haft D.H."/>
            <person name="Sait M."/>
            <person name="Badger J."/>
            <person name="Barabote R.D."/>
            <person name="Bradley B."/>
            <person name="Brettin T.S."/>
            <person name="Brinkac L.M."/>
            <person name="Bruce D."/>
            <person name="Creasy T."/>
            <person name="Daugherty S.C."/>
            <person name="Davidsen T.M."/>
            <person name="DeBoy R.T."/>
            <person name="Detter J.C."/>
            <person name="Dodson R.J."/>
            <person name="Durkin A.S."/>
            <person name="Ganapathy A."/>
            <person name="Gwinn-Giglio M."/>
            <person name="Han C.S."/>
            <person name="Khouri H."/>
            <person name="Kiss H."/>
            <person name="Kothari S.P."/>
            <person name="Madupu R."/>
            <person name="Nelson K.E."/>
            <person name="Nelson W.C."/>
            <person name="Paulsen I."/>
            <person name="Penn K."/>
            <person name="Ren Q."/>
            <person name="Rosovitz M.J."/>
            <person name="Selengut J.D."/>
            <person name="Shrivastava S."/>
            <person name="Sullivan S.A."/>
            <person name="Tapia R."/>
            <person name="Thompson L.S."/>
            <person name="Watkins K.L."/>
            <person name="Yang Q."/>
            <person name="Yu C."/>
            <person name="Zafar N."/>
            <person name="Zhou L."/>
            <person name="Kuske C.R."/>
        </authorList>
    </citation>
    <scope>NUCLEOTIDE SEQUENCE [LARGE SCALE GENOMIC DNA]</scope>
    <source>
        <strain>Ellin6076</strain>
    </source>
</reference>
<gene>
    <name evidence="1" type="primary">argB</name>
    <name type="ordered locus">Acid_0724</name>
</gene>
<evidence type="ECO:0000255" key="1">
    <source>
        <dbReference type="HAMAP-Rule" id="MF_00082"/>
    </source>
</evidence>